<sequence>MLTRFITDVSTRFNPFSAKAKAARLFLSFLPPNARSNGMNITTQLLPRNSTETPLLYVKFKDGKEMNLDVENMGIKSIVEEVDRHSRILQKQADLNDG</sequence>
<organism>
    <name type="scientific">Neurospora crassa (strain ATCC 24698 / 74-OR23-1A / CBS 708.71 / DSM 1257 / FGSC 987)</name>
    <dbReference type="NCBI Taxonomy" id="367110"/>
    <lineage>
        <taxon>Eukaryota</taxon>
        <taxon>Fungi</taxon>
        <taxon>Dikarya</taxon>
        <taxon>Ascomycota</taxon>
        <taxon>Pezizomycotina</taxon>
        <taxon>Sordariomycetes</taxon>
        <taxon>Sordariomycetidae</taxon>
        <taxon>Sordariales</taxon>
        <taxon>Sordariaceae</taxon>
        <taxon>Neurospora</taxon>
    </lineage>
</organism>
<evidence type="ECO:0000269" key="1">
    <source>
    </source>
</evidence>
<evidence type="ECO:0000303" key="2">
    <source>
    </source>
</evidence>
<evidence type="ECO:0000305" key="3"/>
<evidence type="ECO:0000305" key="4">
    <source>
    </source>
</evidence>
<evidence type="ECO:0007744" key="5">
    <source>
        <dbReference type="PDB" id="6YWS"/>
    </source>
</evidence>
<evidence type="ECO:0007744" key="6">
    <source>
        <dbReference type="PDB" id="6YWV"/>
    </source>
</evidence>
<gene>
    <name type="primary">mrpl44</name>
    <name type="ORF">NCU00952</name>
</gene>
<name>RM44_NEUCR</name>
<reference key="1">
    <citation type="journal article" date="2003" name="Nature">
        <title>The genome sequence of the filamentous fungus Neurospora crassa.</title>
        <authorList>
            <person name="Galagan J.E."/>
            <person name="Calvo S.E."/>
            <person name="Borkovich K.A."/>
            <person name="Selker E.U."/>
            <person name="Read N.D."/>
            <person name="Jaffe D.B."/>
            <person name="FitzHugh W."/>
            <person name="Ma L.-J."/>
            <person name="Smirnov S."/>
            <person name="Purcell S."/>
            <person name="Rehman B."/>
            <person name="Elkins T."/>
            <person name="Engels R."/>
            <person name="Wang S."/>
            <person name="Nielsen C.B."/>
            <person name="Butler J."/>
            <person name="Endrizzi M."/>
            <person name="Qui D."/>
            <person name="Ianakiev P."/>
            <person name="Bell-Pedersen D."/>
            <person name="Nelson M.A."/>
            <person name="Werner-Washburne M."/>
            <person name="Selitrennikoff C.P."/>
            <person name="Kinsey J.A."/>
            <person name="Braun E.L."/>
            <person name="Zelter A."/>
            <person name="Schulte U."/>
            <person name="Kothe G.O."/>
            <person name="Jedd G."/>
            <person name="Mewes H.-W."/>
            <person name="Staben C."/>
            <person name="Marcotte E."/>
            <person name="Greenberg D."/>
            <person name="Roy A."/>
            <person name="Foley K."/>
            <person name="Naylor J."/>
            <person name="Stange-Thomann N."/>
            <person name="Barrett R."/>
            <person name="Gnerre S."/>
            <person name="Kamal M."/>
            <person name="Kamvysselis M."/>
            <person name="Mauceli E.W."/>
            <person name="Bielke C."/>
            <person name="Rudd S."/>
            <person name="Frishman D."/>
            <person name="Krystofova S."/>
            <person name="Rasmussen C."/>
            <person name="Metzenberg R.L."/>
            <person name="Perkins D.D."/>
            <person name="Kroken S."/>
            <person name="Cogoni C."/>
            <person name="Macino G."/>
            <person name="Catcheside D.E.A."/>
            <person name="Li W."/>
            <person name="Pratt R.J."/>
            <person name="Osmani S.A."/>
            <person name="DeSouza C.P.C."/>
            <person name="Glass N.L."/>
            <person name="Orbach M.J."/>
            <person name="Berglund J.A."/>
            <person name="Voelker R."/>
            <person name="Yarden O."/>
            <person name="Plamann M."/>
            <person name="Seiler S."/>
            <person name="Dunlap J.C."/>
            <person name="Radford A."/>
            <person name="Aramayo R."/>
            <person name="Natvig D.O."/>
            <person name="Alex L.A."/>
            <person name="Mannhaupt G."/>
            <person name="Ebbole D.J."/>
            <person name="Freitag M."/>
            <person name="Paulsen I."/>
            <person name="Sachs M.S."/>
            <person name="Lander E.S."/>
            <person name="Nusbaum C."/>
            <person name="Birren B.W."/>
        </authorList>
    </citation>
    <scope>NUCLEOTIDE SEQUENCE [LARGE SCALE GENOMIC DNA]</scope>
    <source>
        <strain>ATCC 24698 / 74-OR23-1A / CBS 708.71 / DSM 1257 / FGSC 987</strain>
    </source>
</reference>
<reference evidence="5 6" key="2">
    <citation type="journal article" date="2020" name="Nat. Commun.">
        <title>Analysis of translating mitoribosome reveals functional characteristics of translation in mitochondria of fungi.</title>
        <authorList>
            <person name="Itoh Y."/>
            <person name="Naschberger A."/>
            <person name="Mortezaei N."/>
            <person name="Herrmann J.M."/>
            <person name="Amunts A."/>
        </authorList>
    </citation>
    <scope>STRUCTURE BY ELECTRON MICROSCOPY (2.74 ANGSTROMS)</scope>
</reference>
<protein>
    <recommendedName>
        <fullName evidence="2">Large ribosomal subunit protein mL53</fullName>
    </recommendedName>
</protein>
<comment type="function">
    <text evidence="4">Component of the mitochondrial ribosome (mitoribosome), a dedicated translation machinery responsible for the synthesis of mitochondrial genome-encoded proteins, including at least some of the essential transmembrane subunits of the mitochondrial respiratory chain. The mitoribosomes are attached to the mitochondrial inner membrane and translation products are cotranslationally integrated into the membrane.</text>
</comment>
<comment type="subunit">
    <text evidence="1">Component of the mitochondrial large ribosomal subunit (mt-LSU). Mature N.crassa 74S mitochondrial ribosomes consist of a small (37S) and a large (54S) subunit. The 37S small subunit contains a 16S ribosomal RNA (16S mt-rRNA) and 32 different proteins. The 54S large subunit contains a 23S rRNA (23S mt-rRNA) and 42 different proteins.</text>
</comment>
<comment type="subcellular location">
    <subcellularLocation>
        <location evidence="1">Mitochondrion</location>
    </subcellularLocation>
</comment>
<comment type="similarity">
    <text evidence="3">Belongs to the mitochondrion-specific ribosomal protein mL53 family.</text>
</comment>
<proteinExistence type="evidence at protein level"/>
<feature type="chain" id="PRO_0000458598" description="Large ribosomal subunit protein mL53">
    <location>
        <begin position="1"/>
        <end position="98"/>
    </location>
</feature>
<keyword id="KW-0002">3D-structure</keyword>
<keyword id="KW-0496">Mitochondrion</keyword>
<keyword id="KW-1185">Reference proteome</keyword>
<keyword id="KW-0687">Ribonucleoprotein</keyword>
<keyword id="KW-0689">Ribosomal protein</keyword>
<dbReference type="EMBL" id="CM002236">
    <property type="protein sequence ID" value="EAA35909.1"/>
    <property type="molecule type" value="Genomic_DNA"/>
</dbReference>
<dbReference type="RefSeq" id="XP_965145.1">
    <property type="nucleotide sequence ID" value="XM_960052.2"/>
</dbReference>
<dbReference type="PDB" id="6YWS">
    <property type="method" value="EM"/>
    <property type="resolution" value="2.74 A"/>
    <property type="chains" value="h=1-98"/>
</dbReference>
<dbReference type="PDB" id="6YWV">
    <property type="method" value="EM"/>
    <property type="resolution" value="3.03 A"/>
    <property type="chains" value="h=1-98"/>
</dbReference>
<dbReference type="PDB" id="6YWX">
    <property type="method" value="EM"/>
    <property type="resolution" value="3.10 A"/>
    <property type="chains" value="h=1-98"/>
</dbReference>
<dbReference type="PDBsum" id="6YWS"/>
<dbReference type="PDBsum" id="6YWV"/>
<dbReference type="PDBsum" id="6YWX"/>
<dbReference type="EMDB" id="EMD-10973"/>
<dbReference type="EMDB" id="EMD-10977"/>
<dbReference type="EMDB" id="EMD-10978"/>
<dbReference type="SMR" id="Q7SGH0"/>
<dbReference type="FunCoup" id="Q7SGH0">
    <property type="interactions" value="76"/>
</dbReference>
<dbReference type="STRING" id="367110.Q7SGH0"/>
<dbReference type="PaxDb" id="5141-EFNCRP00000000884"/>
<dbReference type="EnsemblFungi" id="EAA35909">
    <property type="protein sequence ID" value="EAA35909"/>
    <property type="gene ID" value="NCU00952"/>
</dbReference>
<dbReference type="GeneID" id="3881313"/>
<dbReference type="KEGG" id="ncr:NCU00952"/>
<dbReference type="VEuPathDB" id="FungiDB:NCU00952"/>
<dbReference type="HOGENOM" id="CLU_131037_1_0_1"/>
<dbReference type="InParanoid" id="Q7SGH0"/>
<dbReference type="OrthoDB" id="4136894at2759"/>
<dbReference type="Proteomes" id="UP000001805">
    <property type="component" value="Chromosome 1, Linkage Group I"/>
</dbReference>
<dbReference type="GO" id="GO:0005762">
    <property type="term" value="C:mitochondrial large ribosomal subunit"/>
    <property type="evidence" value="ECO:0000318"/>
    <property type="project" value="GO_Central"/>
</dbReference>
<dbReference type="GO" id="GO:0003735">
    <property type="term" value="F:structural constituent of ribosome"/>
    <property type="evidence" value="ECO:0000318"/>
    <property type="project" value="GO_Central"/>
</dbReference>
<dbReference type="FunFam" id="3.40.30.10:FF:000260">
    <property type="entry name" value="Mitochondrial ribosomal protein L44"/>
    <property type="match status" value="1"/>
</dbReference>
<dbReference type="Gene3D" id="3.40.30.10">
    <property type="entry name" value="Glutaredoxin"/>
    <property type="match status" value="1"/>
</dbReference>
<dbReference type="InterPro" id="IPR019716">
    <property type="entry name" value="Ribosomal_mL53"/>
</dbReference>
<dbReference type="InterPro" id="IPR042776">
    <property type="entry name" value="Ribosomal_mL53_fung"/>
</dbReference>
<dbReference type="PANTHER" id="PTHR28236">
    <property type="entry name" value="54S RIBOSOMAL PROTEIN L44, MITOCHONDRIAL"/>
    <property type="match status" value="1"/>
</dbReference>
<dbReference type="PANTHER" id="PTHR28236:SF1">
    <property type="entry name" value="LARGE RIBOSOMAL SUBUNIT PROTEIN ML53"/>
    <property type="match status" value="1"/>
</dbReference>
<dbReference type="Pfam" id="PF10780">
    <property type="entry name" value="MRP_L53"/>
    <property type="match status" value="1"/>
</dbReference>
<accession>Q7SGH0</accession>